<evidence type="ECO:0000250" key="1">
    <source>
        <dbReference type="UniProtKB" id="P04035"/>
    </source>
</evidence>
<evidence type="ECO:0000255" key="2"/>
<evidence type="ECO:0000255" key="3">
    <source>
        <dbReference type="PROSITE-ProRule" id="PRU00498"/>
    </source>
</evidence>
<evidence type="ECO:0000255" key="4">
    <source>
        <dbReference type="PROSITE-ProRule" id="PRU10003"/>
    </source>
</evidence>
<evidence type="ECO:0000255" key="5">
    <source>
        <dbReference type="RuleBase" id="RU361219"/>
    </source>
</evidence>
<evidence type="ECO:0000269" key="6">
    <source>
    </source>
</evidence>
<evidence type="ECO:0000269" key="7">
    <source>
    </source>
</evidence>
<evidence type="ECO:0000303" key="8">
    <source>
    </source>
</evidence>
<evidence type="ECO:0000305" key="9"/>
<evidence type="ECO:0000305" key="10">
    <source>
    </source>
</evidence>
<gene>
    <name type="ORF">AN1593</name>
    <name type="ORF">ANIA_01593</name>
</gene>
<reference key="1">
    <citation type="journal article" date="2005" name="Nature">
        <title>Sequencing of Aspergillus nidulans and comparative analysis with A. fumigatus and A. oryzae.</title>
        <authorList>
            <person name="Galagan J.E."/>
            <person name="Calvo S.E."/>
            <person name="Cuomo C."/>
            <person name="Ma L.-J."/>
            <person name="Wortman J.R."/>
            <person name="Batzoglou S."/>
            <person name="Lee S.-I."/>
            <person name="Bastuerkmen M."/>
            <person name="Spevak C.C."/>
            <person name="Clutterbuck J."/>
            <person name="Kapitonov V."/>
            <person name="Jurka J."/>
            <person name="Scazzocchio C."/>
            <person name="Farman M.L."/>
            <person name="Butler J."/>
            <person name="Purcell S."/>
            <person name="Harris S."/>
            <person name="Braus G.H."/>
            <person name="Draht O."/>
            <person name="Busch S."/>
            <person name="D'Enfert C."/>
            <person name="Bouchier C."/>
            <person name="Goldman G.H."/>
            <person name="Bell-Pedersen D."/>
            <person name="Griffiths-Jones S."/>
            <person name="Doonan J.H."/>
            <person name="Yu J."/>
            <person name="Vienken K."/>
            <person name="Pain A."/>
            <person name="Freitag M."/>
            <person name="Selker E.U."/>
            <person name="Archer D.B."/>
            <person name="Penalva M.A."/>
            <person name="Oakley B.R."/>
            <person name="Momany M."/>
            <person name="Tanaka T."/>
            <person name="Kumagai T."/>
            <person name="Asai K."/>
            <person name="Machida M."/>
            <person name="Nierman W.C."/>
            <person name="Denning D.W."/>
            <person name="Caddick M.X."/>
            <person name="Hynes M."/>
            <person name="Paoletti M."/>
            <person name="Fischer R."/>
            <person name="Miller B.L."/>
            <person name="Dyer P.S."/>
            <person name="Sachs M.S."/>
            <person name="Osmani S.A."/>
            <person name="Birren B.W."/>
        </authorList>
    </citation>
    <scope>NUCLEOTIDE SEQUENCE [LARGE SCALE GENOMIC DNA]</scope>
    <source>
        <strain>FGSC A4 / ATCC 38163 / CBS 112.46 / NRRL 194 / M139</strain>
    </source>
</reference>
<reference key="2">
    <citation type="journal article" date="2009" name="Fungal Genet. Biol.">
        <title>The 2008 update of the Aspergillus nidulans genome annotation: a community effort.</title>
        <authorList>
            <person name="Wortman J.R."/>
            <person name="Gilsenan J.M."/>
            <person name="Joardar V."/>
            <person name="Deegan J."/>
            <person name="Clutterbuck J."/>
            <person name="Andersen M.R."/>
            <person name="Archer D."/>
            <person name="Bencina M."/>
            <person name="Braus G."/>
            <person name="Coutinho P."/>
            <person name="von Dohren H."/>
            <person name="Doonan J."/>
            <person name="Driessen A.J."/>
            <person name="Durek P."/>
            <person name="Espeso E."/>
            <person name="Fekete E."/>
            <person name="Flipphi M."/>
            <person name="Estrada C.G."/>
            <person name="Geysens S."/>
            <person name="Goldman G."/>
            <person name="de Groot P.W."/>
            <person name="Hansen K."/>
            <person name="Harris S.D."/>
            <person name="Heinekamp T."/>
            <person name="Helmstaedt K."/>
            <person name="Henrissat B."/>
            <person name="Hofmann G."/>
            <person name="Homan T."/>
            <person name="Horio T."/>
            <person name="Horiuchi H."/>
            <person name="James S."/>
            <person name="Jones M."/>
            <person name="Karaffa L."/>
            <person name="Karanyi Z."/>
            <person name="Kato M."/>
            <person name="Keller N."/>
            <person name="Kelly D.E."/>
            <person name="Kiel J.A."/>
            <person name="Kim J.M."/>
            <person name="van der Klei I.J."/>
            <person name="Klis F.M."/>
            <person name="Kovalchuk A."/>
            <person name="Krasevec N."/>
            <person name="Kubicek C.P."/>
            <person name="Liu B."/>
            <person name="Maccabe A."/>
            <person name="Meyer V."/>
            <person name="Mirabito P."/>
            <person name="Miskei M."/>
            <person name="Mos M."/>
            <person name="Mullins J."/>
            <person name="Nelson D.R."/>
            <person name="Nielsen J."/>
            <person name="Oakley B.R."/>
            <person name="Osmani S.A."/>
            <person name="Pakula T."/>
            <person name="Paszewski A."/>
            <person name="Paulsen I."/>
            <person name="Pilsyk S."/>
            <person name="Pocsi I."/>
            <person name="Punt P.J."/>
            <person name="Ram A.F."/>
            <person name="Ren Q."/>
            <person name="Robellet X."/>
            <person name="Robson G."/>
            <person name="Seiboth B."/>
            <person name="van Solingen P."/>
            <person name="Specht T."/>
            <person name="Sun J."/>
            <person name="Taheri-Talesh N."/>
            <person name="Takeshita N."/>
            <person name="Ussery D."/>
            <person name="vanKuyk P.A."/>
            <person name="Visser H."/>
            <person name="van de Vondervoort P.J."/>
            <person name="de Vries R.P."/>
            <person name="Walton J."/>
            <person name="Xiang X."/>
            <person name="Xiong Y."/>
            <person name="Zeng A.P."/>
            <person name="Brandt B.W."/>
            <person name="Cornell M.J."/>
            <person name="van den Hondel C.A."/>
            <person name="Visser J."/>
            <person name="Oliver S.G."/>
            <person name="Turner G."/>
        </authorList>
    </citation>
    <scope>GENOME REANNOTATION</scope>
    <source>
        <strain>FGSC A4 / ATCC 38163 / CBS 112.46 / NRRL 194 / M139</strain>
    </source>
</reference>
<reference key="3">
    <citation type="journal article" date="2012" name="PLoS ONE">
        <title>Identification and characterization of a novel diterpene gene cluster in Aspergillus nidulans.</title>
        <authorList>
            <person name="Bromann K."/>
            <person name="Toivari M."/>
            <person name="Viljanen K."/>
            <person name="Vuoristo A."/>
            <person name="Ruohonen L."/>
            <person name="Nakari-Setaelae T."/>
        </authorList>
    </citation>
    <scope>FUNCTION</scope>
    <scope>INDUCTION</scope>
    <scope>PATHWAY</scope>
</reference>
<reference key="4">
    <citation type="journal article" date="2016" name="Appl. Microbiol. Biotechnol.">
        <title>Engineering Aspergillus nidulans for heterologous ent-kaurene and gamma-terpinene production.</title>
        <authorList>
            <person name="Bromann K."/>
            <person name="Toivari M."/>
            <person name="Viljanen K."/>
            <person name="Ruohonen L."/>
            <person name="Nakari-Setaelae T."/>
        </authorList>
    </citation>
    <scope>FUNCTION</scope>
</reference>
<organism>
    <name type="scientific">Emericella nidulans (strain FGSC A4 / ATCC 38163 / CBS 112.46 / NRRL 194 / M139)</name>
    <name type="common">Aspergillus nidulans</name>
    <dbReference type="NCBI Taxonomy" id="227321"/>
    <lineage>
        <taxon>Eukaryota</taxon>
        <taxon>Fungi</taxon>
        <taxon>Dikarya</taxon>
        <taxon>Ascomycota</taxon>
        <taxon>Pezizomycotina</taxon>
        <taxon>Eurotiomycetes</taxon>
        <taxon>Eurotiomycetidae</taxon>
        <taxon>Eurotiales</taxon>
        <taxon>Aspergillaceae</taxon>
        <taxon>Aspergillus</taxon>
        <taxon>Aspergillus subgen. Nidulantes</taxon>
    </lineage>
</organism>
<dbReference type="EC" id="1.1.1.34" evidence="5"/>
<dbReference type="EMBL" id="AACD01000025">
    <property type="protein sequence ID" value="EAA64300.1"/>
    <property type="status" value="ALT_SEQ"/>
    <property type="molecule type" value="Genomic_DNA"/>
</dbReference>
<dbReference type="EMBL" id="BN001307">
    <property type="protein sequence ID" value="CBF85179.1"/>
    <property type="molecule type" value="Genomic_DNA"/>
</dbReference>
<dbReference type="RefSeq" id="XP_659197.1">
    <property type="nucleotide sequence ID" value="XM_654105.1"/>
</dbReference>
<dbReference type="SMR" id="C8VN86"/>
<dbReference type="STRING" id="227321.C8VN86"/>
<dbReference type="EnsemblFungi" id="CBF85179">
    <property type="protein sequence ID" value="CBF85179"/>
    <property type="gene ID" value="ANIA_01593"/>
</dbReference>
<dbReference type="GeneID" id="2875220"/>
<dbReference type="KEGG" id="ani:ANIA_01593"/>
<dbReference type="VEuPathDB" id="FungiDB:AN1593"/>
<dbReference type="eggNOG" id="KOG2480">
    <property type="taxonomic scope" value="Eukaryota"/>
</dbReference>
<dbReference type="HOGENOM" id="CLU_455668_0_0_1"/>
<dbReference type="InParanoid" id="C8VN86"/>
<dbReference type="OMA" id="VGRNIEN"/>
<dbReference type="OrthoDB" id="310654at2759"/>
<dbReference type="UniPathway" id="UPA00058">
    <property type="reaction ID" value="UER00103"/>
</dbReference>
<dbReference type="Proteomes" id="UP000000560">
    <property type="component" value="Chromosome VII"/>
</dbReference>
<dbReference type="GO" id="GO:0005789">
    <property type="term" value="C:endoplasmic reticulum membrane"/>
    <property type="evidence" value="ECO:0000318"/>
    <property type="project" value="GO_Central"/>
</dbReference>
<dbReference type="GO" id="GO:0005778">
    <property type="term" value="C:peroxisomal membrane"/>
    <property type="evidence" value="ECO:0000318"/>
    <property type="project" value="GO_Central"/>
</dbReference>
<dbReference type="GO" id="GO:0004420">
    <property type="term" value="F:hydroxymethylglutaryl-CoA reductase (NADPH) activity"/>
    <property type="evidence" value="ECO:0000318"/>
    <property type="project" value="GO_Central"/>
</dbReference>
<dbReference type="GO" id="GO:0015936">
    <property type="term" value="P:coenzyme A metabolic process"/>
    <property type="evidence" value="ECO:0007669"/>
    <property type="project" value="InterPro"/>
</dbReference>
<dbReference type="GO" id="GO:0006696">
    <property type="term" value="P:ergosterol biosynthetic process"/>
    <property type="evidence" value="ECO:0000318"/>
    <property type="project" value="GO_Central"/>
</dbReference>
<dbReference type="GO" id="GO:0008299">
    <property type="term" value="P:isoprenoid biosynthetic process"/>
    <property type="evidence" value="ECO:0000318"/>
    <property type="project" value="GO_Central"/>
</dbReference>
<dbReference type="GO" id="GO:0019748">
    <property type="term" value="P:secondary metabolic process"/>
    <property type="evidence" value="ECO:0000270"/>
    <property type="project" value="AspGD"/>
</dbReference>
<dbReference type="CDD" id="cd00643">
    <property type="entry name" value="HMG-CoA_reductase_classI"/>
    <property type="match status" value="1"/>
</dbReference>
<dbReference type="FunFam" id="3.30.70.420:FF:000001">
    <property type="entry name" value="3-hydroxy-3-methylglutaryl coenzyme A reductase"/>
    <property type="match status" value="1"/>
</dbReference>
<dbReference type="FunFam" id="3.90.770.10:FF:000001">
    <property type="entry name" value="3-hydroxy-3-methylglutaryl coenzyme A reductase"/>
    <property type="match status" value="1"/>
</dbReference>
<dbReference type="Gene3D" id="3.90.770.10">
    <property type="entry name" value="3-hydroxy-3-methylglutaryl-coenzyme A Reductase, Chain A, domain 2"/>
    <property type="match status" value="1"/>
</dbReference>
<dbReference type="Gene3D" id="1.10.3270.10">
    <property type="entry name" value="HMGR, N-terminal domain"/>
    <property type="match status" value="1"/>
</dbReference>
<dbReference type="Gene3D" id="3.30.70.420">
    <property type="entry name" value="Hydroxymethylglutaryl-CoA reductase, class I/II, NAD/NADP-binding domain"/>
    <property type="match status" value="1"/>
</dbReference>
<dbReference type="InterPro" id="IPR002202">
    <property type="entry name" value="HMG_CoA_Rdtase"/>
</dbReference>
<dbReference type="InterPro" id="IPR023074">
    <property type="entry name" value="HMG_CoA_Rdtase_cat_sf"/>
</dbReference>
<dbReference type="InterPro" id="IPR023076">
    <property type="entry name" value="HMG_CoA_Rdtase_CS"/>
</dbReference>
<dbReference type="InterPro" id="IPR004554">
    <property type="entry name" value="HMG_CoA_Rdtase_eu_arc"/>
</dbReference>
<dbReference type="InterPro" id="IPR023282">
    <property type="entry name" value="HMG_CoA_Rdtase_N"/>
</dbReference>
<dbReference type="InterPro" id="IPR009023">
    <property type="entry name" value="HMG_CoA_Rdtase_NAD(P)-bd_sf"/>
</dbReference>
<dbReference type="InterPro" id="IPR009029">
    <property type="entry name" value="HMG_CoA_Rdtase_sub-bd_dom_sf"/>
</dbReference>
<dbReference type="NCBIfam" id="TIGR00533">
    <property type="entry name" value="HMG_CoA_R_NADP"/>
    <property type="match status" value="1"/>
</dbReference>
<dbReference type="PANTHER" id="PTHR10572">
    <property type="entry name" value="3-HYDROXY-3-METHYLGLUTARYL-COENZYME A REDUCTASE"/>
    <property type="match status" value="1"/>
</dbReference>
<dbReference type="PANTHER" id="PTHR10572:SF24">
    <property type="entry name" value="3-HYDROXY-3-METHYLGLUTARYL-COENZYME A REDUCTASE"/>
    <property type="match status" value="1"/>
</dbReference>
<dbReference type="Pfam" id="PF00368">
    <property type="entry name" value="HMG-CoA_red"/>
    <property type="match status" value="1"/>
</dbReference>
<dbReference type="PRINTS" id="PR00071">
    <property type="entry name" value="HMGCOARDTASE"/>
</dbReference>
<dbReference type="SUPFAM" id="SSF55035">
    <property type="entry name" value="NAD-binding domain of HMG-CoA reductase"/>
    <property type="match status" value="1"/>
</dbReference>
<dbReference type="SUPFAM" id="SSF56542">
    <property type="entry name" value="Substrate-binding domain of HMG-CoA reductase"/>
    <property type="match status" value="1"/>
</dbReference>
<dbReference type="PROSITE" id="PS00066">
    <property type="entry name" value="HMG_COA_REDUCTASE_1"/>
    <property type="match status" value="1"/>
</dbReference>
<dbReference type="PROSITE" id="PS00318">
    <property type="entry name" value="HMG_COA_REDUCTASE_2"/>
    <property type="match status" value="1"/>
</dbReference>
<dbReference type="PROSITE" id="PS01192">
    <property type="entry name" value="HMG_COA_REDUCTASE_3"/>
    <property type="match status" value="1"/>
</dbReference>
<dbReference type="PROSITE" id="PS50065">
    <property type="entry name" value="HMG_COA_REDUCTASE_4"/>
    <property type="match status" value="1"/>
</dbReference>
<protein>
    <recommendedName>
        <fullName evidence="8">3-hydroxy-3-methylglutaryl coenzyme A reductase AN1593</fullName>
        <shortName evidence="8">HMG-CoA reductase</shortName>
        <ecNumber evidence="5">1.1.1.34</ecNumber>
    </recommendedName>
    <alternativeName>
        <fullName evidence="8">Pimaradiene biosynthesis cluster protein AN1593</fullName>
    </alternativeName>
</protein>
<name>PBCC_EMENI</name>
<proteinExistence type="evidence at transcript level"/>
<keyword id="KW-0325">Glycoprotein</keyword>
<keyword id="KW-0444">Lipid biosynthesis</keyword>
<keyword id="KW-0443">Lipid metabolism</keyword>
<keyword id="KW-0472">Membrane</keyword>
<keyword id="KW-0521">NADP</keyword>
<keyword id="KW-0560">Oxidoreductase</keyword>
<keyword id="KW-1185">Reference proteome</keyword>
<keyword id="KW-0752">Steroid biosynthesis</keyword>
<keyword id="KW-0753">Steroid metabolism</keyword>
<keyword id="KW-0756">Sterol biosynthesis</keyword>
<keyword id="KW-1207">Sterol metabolism</keyword>
<keyword id="KW-0812">Transmembrane</keyword>
<keyword id="KW-1133">Transmembrane helix</keyword>
<feature type="chain" id="PRO_0000450841" description="3-hydroxy-3-methylglutaryl coenzyme A reductase AN1593">
    <location>
        <begin position="1"/>
        <end position="416"/>
    </location>
</feature>
<feature type="transmembrane region" description="Helical" evidence="2">
    <location>
        <begin position="380"/>
        <end position="400"/>
    </location>
</feature>
<feature type="active site" description="Charge relay system" evidence="1">
    <location>
        <position position="103"/>
    </location>
</feature>
<feature type="active site" description="Charge relay system" evidence="1">
    <location>
        <position position="236"/>
    </location>
</feature>
<feature type="active site" description="Charge relay system" evidence="1">
    <location>
        <position position="312"/>
    </location>
</feature>
<feature type="active site" description="Proton donor" evidence="4">
    <location>
        <position position="408"/>
    </location>
</feature>
<feature type="glycosylation site" description="N-linked (GlcNAc...) asparagine" evidence="3">
    <location>
        <position position="167"/>
    </location>
</feature>
<feature type="glycosylation site" description="N-linked (GlcNAc...) asparagine" evidence="3">
    <location>
        <position position="277"/>
    </location>
</feature>
<comment type="function">
    <text evidence="6 7 10">3-hydroxy-3-methylglutaryl coenzyme A reductase; part of the gene cluster that mediates the biosynthesis of the diterpene ent-pimara-8(14),15-diene (PD) (PubMed:22506079, PubMed:27098256). Within the cluster, the HMG-CoA reductase AN1593 functions in the mevalonate pathway, which produces isoprenoid precursors (PubMed:22506079, PubMed:27098256). The geranylgeranyl pyrophosphate (GGPP) synthase AN1592 is needed in the formation of GGPP, the precursor for diterpenes (PubMed:22506079, PubMed:27098256). Lastly, the pimaradiene synthase pbcA performs the 2 cyclization steps that convert GGPP to ent-pimara-8(14),15-diene (PubMed:22506079, PubMed:27098256). The putative roles of the remaining cluster enzymes in ent-pimara-8(14),15-diene biosynthesis is unclear (Probable). The cytochrome P450 monooxygenase AN1598, the glutathione S-transferase AN1595, the oxidoreductases AN1596 and AN1597 probably function as decorative enzymes (Probable). It is possible that in biological conditions the compound is oxidized to ent-pimara-8(14),15-dien-19-oic acid, which is a bioactive diterpene compound predominant in many plant extracts (Probable).</text>
</comment>
<comment type="catalytic activity">
    <reaction evidence="5">
        <text>(R)-mevalonate + 2 NADP(+) + CoA = (3S)-3-hydroxy-3-methylglutaryl-CoA + 2 NADPH + 2 H(+)</text>
        <dbReference type="Rhea" id="RHEA:15989"/>
        <dbReference type="ChEBI" id="CHEBI:15378"/>
        <dbReference type="ChEBI" id="CHEBI:36464"/>
        <dbReference type="ChEBI" id="CHEBI:43074"/>
        <dbReference type="ChEBI" id="CHEBI:57287"/>
        <dbReference type="ChEBI" id="CHEBI:57783"/>
        <dbReference type="ChEBI" id="CHEBI:58349"/>
        <dbReference type="EC" id="1.1.1.34"/>
    </reaction>
</comment>
<comment type="pathway">
    <text evidence="5">Metabolic intermediate biosynthesis; (R)-mevalonate biosynthesis; (R)-mevalonate from acetyl-CoA: step 3/3.</text>
</comment>
<comment type="subcellular location">
    <subcellularLocation>
        <location evidence="2">Membrane</location>
        <topology evidence="2">Single-pass membrane protein</topology>
    </subcellularLocation>
</comment>
<comment type="induction">
    <text evidence="6">Expression is positively regulated by the cluster-specific transcription factor pbcR.</text>
</comment>
<comment type="similarity">
    <text evidence="9">Belongs to the HMG-CoA reductase family.</text>
</comment>
<comment type="sequence caution" evidence="9">
    <conflict type="erroneous gene model prediction">
        <sequence resource="EMBL-CDS" id="EAA64300"/>
    </conflict>
</comment>
<sequence length="416" mass="43383">MPESQIIELGTLGQIPLYSLERALQDPLRAVKLRRQIVSQHQATGNIDFTTDGSALPYEGYDYKAVLGACCENVIGYMPIPVGVAGPIKINGKMVFLPMSTTEGALVASTNRGCMAINAGGGVTALVLGDGMTRAPIVRFPSLEEAGAAKQWLGSDAGFLIIEDAFNASSRFARLQNIKATAVGSDLYIRFTASTGDAMGMNMISKGVEQALEAMQKHGFESMDVVSLSGNFCADKKPAAVNWIEGRGKTVTAQATIPEHAVRETLKTSVEALVELNVSKNLVGSAVAGALGGFNAHAANVVTAIYLATGQDPAQNVQSSNTLTVMKNVNGDLQISVFMPSIEVGTVGGGTVLGPQKAMLHMMGVQGADPEQPGRNAQELALLVAAGVLAGELSLCSALSAGSLVKSHLTHNRKKG</sequence>
<accession>C8VN86</accession>
<accession>Q5BCY7</accession>